<sequence>MAHGEVLEFEEYVRTRQDALLRSARRLVPDPVDAQDLLQTALVRTYGRWDGIADKRLADAYLRRVMINTRTEWWRARKLEEVPTEQLPDASVDDSTEQHADRALLMDILKVLAPKQRSVVVLRHWEQMSTEETAAALGMSAGTVKSTLHRALARLREELESRDLDARALEREERERCAA</sequence>
<reference key="1">
    <citation type="journal article" date="2001" name="Proc. Natl. Acad. Sci. U.S.A.">
        <title>Genome sequence of an industrial microorganism Streptomyces avermitilis: deducing the ability of producing secondary metabolites.</title>
        <authorList>
            <person name="Omura S."/>
            <person name="Ikeda H."/>
            <person name="Ishikawa J."/>
            <person name="Hanamoto A."/>
            <person name="Takahashi C."/>
            <person name="Shinose M."/>
            <person name="Takahashi Y."/>
            <person name="Horikawa H."/>
            <person name="Nakazawa H."/>
            <person name="Osonoe T."/>
            <person name="Kikuchi H."/>
            <person name="Shiba T."/>
            <person name="Sakaki Y."/>
            <person name="Hattori M."/>
        </authorList>
    </citation>
    <scope>NUCLEOTIDE SEQUENCE [LARGE SCALE GENOMIC DNA]</scope>
    <source>
        <strain>ATCC 31267 / DSM 46492 / JCM 5070 / NBRC 14893 / NCIMB 12804 / NRRL 8165 / MA-4680</strain>
    </source>
</reference>
<reference key="2">
    <citation type="journal article" date="2003" name="Nat. Biotechnol.">
        <title>Complete genome sequence and comparative analysis of the industrial microorganism Streptomyces avermitilis.</title>
        <authorList>
            <person name="Ikeda H."/>
            <person name="Ishikawa J."/>
            <person name="Hanamoto A."/>
            <person name="Shinose M."/>
            <person name="Kikuchi H."/>
            <person name="Shiba T."/>
            <person name="Sakaki Y."/>
            <person name="Hattori M."/>
            <person name="Omura S."/>
        </authorList>
    </citation>
    <scope>NUCLEOTIDE SEQUENCE [LARGE SCALE GENOMIC DNA]</scope>
    <source>
        <strain>ATCC 31267 / DSM 46492 / JCM 5070 / NBRC 14893 / NCIMB 12804 / NRRL 8165 / MA-4680</strain>
    </source>
</reference>
<organism>
    <name type="scientific">Streptomyces avermitilis (strain ATCC 31267 / DSM 46492 / JCM 5070 / NBRC 14893 / NCIMB 12804 / NRRL 8165 / MA-4680)</name>
    <dbReference type="NCBI Taxonomy" id="227882"/>
    <lineage>
        <taxon>Bacteria</taxon>
        <taxon>Bacillati</taxon>
        <taxon>Actinomycetota</taxon>
        <taxon>Actinomycetes</taxon>
        <taxon>Kitasatosporales</taxon>
        <taxon>Streptomycetaceae</taxon>
        <taxon>Streptomyces</taxon>
    </lineage>
</organism>
<dbReference type="EMBL" id="BA000030">
    <property type="protein sequence ID" value="BAC72418.1"/>
    <property type="molecule type" value="Genomic_DNA"/>
</dbReference>
<dbReference type="RefSeq" id="WP_010986130.1">
    <property type="nucleotide sequence ID" value="NZ_JZJK01000054.1"/>
</dbReference>
<dbReference type="SMR" id="Q82EA9"/>
<dbReference type="GeneID" id="41541786"/>
<dbReference type="KEGG" id="sma:SAVERM_4706"/>
<dbReference type="eggNOG" id="COG1595">
    <property type="taxonomic scope" value="Bacteria"/>
</dbReference>
<dbReference type="HOGENOM" id="CLU_047691_15_4_11"/>
<dbReference type="OrthoDB" id="3686693at2"/>
<dbReference type="Proteomes" id="UP000000428">
    <property type="component" value="Chromosome"/>
</dbReference>
<dbReference type="GO" id="GO:0005737">
    <property type="term" value="C:cytoplasm"/>
    <property type="evidence" value="ECO:0007669"/>
    <property type="project" value="UniProtKB-SubCell"/>
</dbReference>
<dbReference type="GO" id="GO:0003677">
    <property type="term" value="F:DNA binding"/>
    <property type="evidence" value="ECO:0007669"/>
    <property type="project" value="UniProtKB-KW"/>
</dbReference>
<dbReference type="GO" id="GO:0016987">
    <property type="term" value="F:sigma factor activity"/>
    <property type="evidence" value="ECO:0007669"/>
    <property type="project" value="UniProtKB-KW"/>
</dbReference>
<dbReference type="GO" id="GO:0006352">
    <property type="term" value="P:DNA-templated transcription initiation"/>
    <property type="evidence" value="ECO:0007669"/>
    <property type="project" value="InterPro"/>
</dbReference>
<dbReference type="GO" id="GO:0006950">
    <property type="term" value="P:response to stress"/>
    <property type="evidence" value="ECO:0007669"/>
    <property type="project" value="UniProtKB-ARBA"/>
</dbReference>
<dbReference type="CDD" id="cd06171">
    <property type="entry name" value="Sigma70_r4"/>
    <property type="match status" value="1"/>
</dbReference>
<dbReference type="Gene3D" id="1.10.1740.10">
    <property type="match status" value="1"/>
</dbReference>
<dbReference type="Gene3D" id="1.10.10.10">
    <property type="entry name" value="Winged helix-like DNA-binding domain superfamily/Winged helix DNA-binding domain"/>
    <property type="match status" value="1"/>
</dbReference>
<dbReference type="InterPro" id="IPR039425">
    <property type="entry name" value="RNA_pol_sigma-70-like"/>
</dbReference>
<dbReference type="InterPro" id="IPR014284">
    <property type="entry name" value="RNA_pol_sigma-70_dom"/>
</dbReference>
<dbReference type="InterPro" id="IPR014325">
    <property type="entry name" value="RNA_pol_sigma-E_actinobac"/>
</dbReference>
<dbReference type="InterPro" id="IPR000838">
    <property type="entry name" value="RNA_pol_sigma70_ECF_CS"/>
</dbReference>
<dbReference type="InterPro" id="IPR007627">
    <property type="entry name" value="RNA_pol_sigma70_r2"/>
</dbReference>
<dbReference type="InterPro" id="IPR013249">
    <property type="entry name" value="RNA_pol_sigma70_r4_t2"/>
</dbReference>
<dbReference type="InterPro" id="IPR013325">
    <property type="entry name" value="RNA_pol_sigma_r2"/>
</dbReference>
<dbReference type="InterPro" id="IPR013324">
    <property type="entry name" value="RNA_pol_sigma_r3/r4-like"/>
</dbReference>
<dbReference type="InterPro" id="IPR036388">
    <property type="entry name" value="WH-like_DNA-bd_sf"/>
</dbReference>
<dbReference type="NCBIfam" id="TIGR02983">
    <property type="entry name" value="SigE-fam_strep"/>
    <property type="match status" value="1"/>
</dbReference>
<dbReference type="NCBIfam" id="TIGR02937">
    <property type="entry name" value="sigma70-ECF"/>
    <property type="match status" value="1"/>
</dbReference>
<dbReference type="PANTHER" id="PTHR43133:SF50">
    <property type="entry name" value="ECF RNA POLYMERASE SIGMA FACTOR SIGM"/>
    <property type="match status" value="1"/>
</dbReference>
<dbReference type="PANTHER" id="PTHR43133">
    <property type="entry name" value="RNA POLYMERASE ECF-TYPE SIGMA FACTO"/>
    <property type="match status" value="1"/>
</dbReference>
<dbReference type="Pfam" id="PF04542">
    <property type="entry name" value="Sigma70_r2"/>
    <property type="match status" value="1"/>
</dbReference>
<dbReference type="Pfam" id="PF08281">
    <property type="entry name" value="Sigma70_r4_2"/>
    <property type="match status" value="1"/>
</dbReference>
<dbReference type="SUPFAM" id="SSF88946">
    <property type="entry name" value="Sigma2 domain of RNA polymerase sigma factors"/>
    <property type="match status" value="1"/>
</dbReference>
<dbReference type="SUPFAM" id="SSF88659">
    <property type="entry name" value="Sigma3 and sigma4 domains of RNA polymerase sigma factors"/>
    <property type="match status" value="1"/>
</dbReference>
<dbReference type="PROSITE" id="PS01063">
    <property type="entry name" value="SIGMA70_ECF"/>
    <property type="match status" value="1"/>
</dbReference>
<accession>Q82EA9</accession>
<comment type="function">
    <text evidence="1">Sigma factors are initiation factors that promote the attachment of RNA polymerase to specific initiation sites and are then released. This sigma factor is required for normal cell wall integrity; it is recruited by RNA polymerase to transcribe genes with cell wall-related functions (By similarity).</text>
</comment>
<comment type="subcellular location">
    <subcellularLocation>
        <location evidence="1">Cytoplasm</location>
    </subcellularLocation>
</comment>
<comment type="similarity">
    <text evidence="2">Belongs to the sigma-70 factor family. ECF subfamily.</text>
</comment>
<feature type="chain" id="PRO_0000314477" description="RNA polymerase sigma-E factor">
    <location>
        <begin position="1"/>
        <end position="179"/>
    </location>
</feature>
<feature type="DNA-binding region" description="H-T-H motif" evidence="1">
    <location>
        <begin position="130"/>
        <end position="149"/>
    </location>
</feature>
<feature type="short sequence motif" description="Polymerase core binding">
    <location>
        <begin position="36"/>
        <end position="49"/>
    </location>
</feature>
<evidence type="ECO:0000250" key="1"/>
<evidence type="ECO:0000305" key="2"/>
<keyword id="KW-0963">Cytoplasm</keyword>
<keyword id="KW-0238">DNA-binding</keyword>
<keyword id="KW-1185">Reference proteome</keyword>
<keyword id="KW-0731">Sigma factor</keyword>
<keyword id="KW-0804">Transcription</keyword>
<keyword id="KW-0805">Transcription regulation</keyword>
<gene>
    <name type="primary">sigE</name>
    <name type="ordered locus">SAV_4706</name>
</gene>
<protein>
    <recommendedName>
        <fullName>RNA polymerase sigma-E factor</fullName>
    </recommendedName>
</protein>
<proteinExistence type="inferred from homology"/>
<name>RPOE_STRAW</name>